<evidence type="ECO:0000255" key="1">
    <source>
        <dbReference type="HAMAP-Rule" id="MF_00514"/>
    </source>
</evidence>
<evidence type="ECO:0000305" key="2"/>
<comment type="similarity">
    <text evidence="1">Belongs to the bacterial ribosomal protein bL35 family.</text>
</comment>
<dbReference type="EMBL" id="AP009049">
    <property type="protein sequence ID" value="BAH07884.1"/>
    <property type="molecule type" value="Genomic_DNA"/>
</dbReference>
<dbReference type="RefSeq" id="WP_012103540.1">
    <property type="nucleotide sequence ID" value="NC_011837.1"/>
</dbReference>
<dbReference type="SMR" id="B9E5V9"/>
<dbReference type="KEGG" id="ckr:CKR_2833"/>
<dbReference type="HOGENOM" id="CLU_169643_1_1_9"/>
<dbReference type="Proteomes" id="UP000007969">
    <property type="component" value="Chromosome"/>
</dbReference>
<dbReference type="GO" id="GO:0022625">
    <property type="term" value="C:cytosolic large ribosomal subunit"/>
    <property type="evidence" value="ECO:0007669"/>
    <property type="project" value="TreeGrafter"/>
</dbReference>
<dbReference type="GO" id="GO:0003735">
    <property type="term" value="F:structural constituent of ribosome"/>
    <property type="evidence" value="ECO:0007669"/>
    <property type="project" value="InterPro"/>
</dbReference>
<dbReference type="GO" id="GO:0006412">
    <property type="term" value="P:translation"/>
    <property type="evidence" value="ECO:0007669"/>
    <property type="project" value="UniProtKB-UniRule"/>
</dbReference>
<dbReference type="FunFam" id="4.10.410.60:FF:000001">
    <property type="entry name" value="50S ribosomal protein L35"/>
    <property type="match status" value="1"/>
</dbReference>
<dbReference type="Gene3D" id="4.10.410.60">
    <property type="match status" value="1"/>
</dbReference>
<dbReference type="HAMAP" id="MF_00514">
    <property type="entry name" value="Ribosomal_bL35"/>
    <property type="match status" value="1"/>
</dbReference>
<dbReference type="InterPro" id="IPR001706">
    <property type="entry name" value="Ribosomal_bL35"/>
</dbReference>
<dbReference type="InterPro" id="IPR021137">
    <property type="entry name" value="Ribosomal_bL35-like"/>
</dbReference>
<dbReference type="InterPro" id="IPR018265">
    <property type="entry name" value="Ribosomal_bL35_CS"/>
</dbReference>
<dbReference type="InterPro" id="IPR037229">
    <property type="entry name" value="Ribosomal_bL35_sf"/>
</dbReference>
<dbReference type="NCBIfam" id="TIGR00001">
    <property type="entry name" value="rpmI_bact"/>
    <property type="match status" value="1"/>
</dbReference>
<dbReference type="PANTHER" id="PTHR33343">
    <property type="entry name" value="54S RIBOSOMAL PROTEIN BL35M"/>
    <property type="match status" value="1"/>
</dbReference>
<dbReference type="PANTHER" id="PTHR33343:SF1">
    <property type="entry name" value="LARGE RIBOSOMAL SUBUNIT PROTEIN BL35M"/>
    <property type="match status" value="1"/>
</dbReference>
<dbReference type="Pfam" id="PF01632">
    <property type="entry name" value="Ribosomal_L35p"/>
    <property type="match status" value="1"/>
</dbReference>
<dbReference type="PRINTS" id="PR00064">
    <property type="entry name" value="RIBOSOMALL35"/>
</dbReference>
<dbReference type="SUPFAM" id="SSF143034">
    <property type="entry name" value="L35p-like"/>
    <property type="match status" value="1"/>
</dbReference>
<dbReference type="PROSITE" id="PS00936">
    <property type="entry name" value="RIBOSOMAL_L35"/>
    <property type="match status" value="1"/>
</dbReference>
<protein>
    <recommendedName>
        <fullName evidence="1">Large ribosomal subunit protein bL35</fullName>
    </recommendedName>
    <alternativeName>
        <fullName evidence="2">50S ribosomal protein L35</fullName>
    </alternativeName>
</protein>
<reference key="1">
    <citation type="submission" date="2005-09" db="EMBL/GenBank/DDBJ databases">
        <title>Complete genome sequence of Clostridium kluyveri and comparative genomics of Clostridia species.</title>
        <authorList>
            <person name="Inui M."/>
            <person name="Nonaka H."/>
            <person name="Shinoda Y."/>
            <person name="Ikenaga Y."/>
            <person name="Abe M."/>
            <person name="Naito K."/>
            <person name="Vertes A.A."/>
            <person name="Yukawa H."/>
        </authorList>
    </citation>
    <scope>NUCLEOTIDE SEQUENCE [LARGE SCALE GENOMIC DNA]</scope>
    <source>
        <strain>NBRC 12016</strain>
    </source>
</reference>
<sequence length="65" mass="7595">MPKMKTKKSVAKRFKLTGTGKLKRAQAFKSHILTKKSRKTKRNLRKTAYVSETQEKVMKKLLPYV</sequence>
<keyword id="KW-0687">Ribonucleoprotein</keyword>
<keyword id="KW-0689">Ribosomal protein</keyword>
<proteinExistence type="inferred from homology"/>
<name>RL35_CLOK1</name>
<feature type="chain" id="PRO_1000194066" description="Large ribosomal subunit protein bL35">
    <location>
        <begin position="1"/>
        <end position="65"/>
    </location>
</feature>
<gene>
    <name evidence="1" type="primary">rpmI</name>
    <name type="ordered locus">CKR_2833</name>
</gene>
<accession>B9E5V9</accession>
<organism>
    <name type="scientific">Clostridium kluyveri (strain NBRC 12016)</name>
    <dbReference type="NCBI Taxonomy" id="583346"/>
    <lineage>
        <taxon>Bacteria</taxon>
        <taxon>Bacillati</taxon>
        <taxon>Bacillota</taxon>
        <taxon>Clostridia</taxon>
        <taxon>Eubacteriales</taxon>
        <taxon>Clostridiaceae</taxon>
        <taxon>Clostridium</taxon>
    </lineage>
</organism>